<gene>
    <name type="primary">GSTP1</name>
</gene>
<proteinExistence type="evidence at transcript level"/>
<reference key="1">
    <citation type="submission" date="1999-09" db="EMBL/GenBank/DDBJ databases">
        <title>Complementary DNA sequence (632 b.p.) of goat germ cell glutathione S-transferase Pi.</title>
        <authorList>
            <person name="Hemchand T."/>
            <person name="Shaha C."/>
        </authorList>
    </citation>
    <scope>NUCLEOTIDE SEQUENCE [MRNA]</scope>
    <source>
        <tissue>Testis</tissue>
    </source>
</reference>
<evidence type="ECO:0000250" key="1"/>
<evidence type="ECO:0000250" key="2">
    <source>
        <dbReference type="UniProtKB" id="P09211"/>
    </source>
</evidence>
<evidence type="ECO:0000250" key="3">
    <source>
        <dbReference type="UniProtKB" id="P19157"/>
    </source>
</evidence>
<evidence type="ECO:0000305" key="4"/>
<comment type="function">
    <text evidence="2">Conjugation of reduced glutathione to a wide number of exogenous and endogenous hydrophobic electrophiles. Involved in the formation of glutathione conjugates of both prostaglandin A2 (PGA2) and prostaglandin J2 (PGJ2). Participates in the formation of novel hepoxilin regioisomers. Negatively regulates CDK5 activity via p25/p35 translocation to prevent neurodegeneration.</text>
</comment>
<comment type="catalytic activity">
    <reaction evidence="2">
        <text>RX + glutathione = an S-substituted glutathione + a halide anion + H(+)</text>
        <dbReference type="Rhea" id="RHEA:16437"/>
        <dbReference type="ChEBI" id="CHEBI:15378"/>
        <dbReference type="ChEBI" id="CHEBI:16042"/>
        <dbReference type="ChEBI" id="CHEBI:17792"/>
        <dbReference type="ChEBI" id="CHEBI:57925"/>
        <dbReference type="ChEBI" id="CHEBI:90779"/>
        <dbReference type="EC" id="2.5.1.18"/>
    </reaction>
    <physiologicalReaction direction="left-to-right" evidence="2">
        <dbReference type="Rhea" id="RHEA:16438"/>
    </physiologicalReaction>
</comment>
<comment type="catalytic activity">
    <reaction evidence="2">
        <text>prostaglandin J2 + glutathione = prostaglandin J2-S-(R)-glutathione</text>
        <dbReference type="Rhea" id="RHEA:50804"/>
        <dbReference type="ChEBI" id="CHEBI:57925"/>
        <dbReference type="ChEBI" id="CHEBI:133396"/>
        <dbReference type="ChEBI" id="CHEBI:133771"/>
    </reaction>
    <physiologicalReaction direction="left-to-right" evidence="2">
        <dbReference type="Rhea" id="RHEA:50805"/>
    </physiologicalReaction>
</comment>
<comment type="catalytic activity">
    <reaction evidence="2">
        <text>prostaglandin J2 + glutathione = prostaglandin J2-S-(S)-glutathione</text>
        <dbReference type="Rhea" id="RHEA:50808"/>
        <dbReference type="ChEBI" id="CHEBI:57925"/>
        <dbReference type="ChEBI" id="CHEBI:133396"/>
        <dbReference type="ChEBI" id="CHEBI:133772"/>
    </reaction>
    <physiologicalReaction direction="left-to-right" evidence="2">
        <dbReference type="Rhea" id="RHEA:50809"/>
    </physiologicalReaction>
</comment>
<comment type="catalytic activity">
    <reaction evidence="2">
        <text>prostaglandin A2 + glutathione = prostaglandin A2-S-(S)-glutathione</text>
        <dbReference type="Rhea" id="RHEA:50800"/>
        <dbReference type="ChEBI" id="CHEBI:57925"/>
        <dbReference type="ChEBI" id="CHEBI:133370"/>
        <dbReference type="ChEBI" id="CHEBI:133769"/>
    </reaction>
    <physiologicalReaction direction="left-to-right" evidence="2">
        <dbReference type="Rhea" id="RHEA:50801"/>
    </physiologicalReaction>
</comment>
<comment type="catalytic activity">
    <reaction evidence="2">
        <text>11(S)-hydroxy-14(S),15(S)-epoxy-(5Z,8Z,12E)-eicosatrienoate + glutathione = (11S,15S)-dihydroxy-14(R)-S-glutathionyl-(5Z,8Z,12E)-eicosatrienoate</text>
        <dbReference type="Rhea" id="RHEA:50260"/>
        <dbReference type="ChEBI" id="CHEBI:57925"/>
        <dbReference type="ChEBI" id="CHEBI:132200"/>
        <dbReference type="ChEBI" id="CHEBI:132201"/>
    </reaction>
    <physiologicalReaction direction="left-to-right" evidence="2">
        <dbReference type="Rhea" id="RHEA:50261"/>
    </physiologicalReaction>
</comment>
<comment type="subunit">
    <text evidence="1">Homodimer. Interacts with CDK5.</text>
</comment>
<comment type="subcellular location">
    <subcellularLocation>
        <location evidence="1">Cytoplasm</location>
    </subcellularLocation>
    <subcellularLocation>
        <location evidence="1">Mitochondrion</location>
    </subcellularLocation>
    <subcellularLocation>
        <location evidence="1">Nucleus</location>
    </subcellularLocation>
    <text evidence="1">The 83 N-terminal amino acids function as un uncleaved transit peptide, and arginine residues within it are crucial for mitochondrial localization.</text>
</comment>
<comment type="similarity">
    <text evidence="4">Belongs to the GST superfamily. Pi family.</text>
</comment>
<keyword id="KW-0007">Acetylation</keyword>
<keyword id="KW-0963">Cytoplasm</keyword>
<keyword id="KW-0443">Lipid metabolism</keyword>
<keyword id="KW-0496">Mitochondrion</keyword>
<keyword id="KW-0539">Nucleus</keyword>
<keyword id="KW-0597">Phosphoprotein</keyword>
<keyword id="KW-1185">Reference proteome</keyword>
<keyword id="KW-0808">Transferase</keyword>
<dbReference type="EC" id="2.5.1.18" evidence="2"/>
<dbReference type="EMBL" id="AF186248">
    <property type="protein sequence ID" value="AAF01323.1"/>
    <property type="molecule type" value="mRNA"/>
</dbReference>
<dbReference type="SMR" id="Q9TTY8"/>
<dbReference type="STRING" id="9925.ENSCHIP00000012372"/>
<dbReference type="Proteomes" id="UP000291000">
    <property type="component" value="Unassembled WGS sequence"/>
</dbReference>
<dbReference type="Proteomes" id="UP000694566">
    <property type="component" value="Unplaced"/>
</dbReference>
<dbReference type="GO" id="GO:0005829">
    <property type="term" value="C:cytosol"/>
    <property type="evidence" value="ECO:0007669"/>
    <property type="project" value="TreeGrafter"/>
</dbReference>
<dbReference type="GO" id="GO:0005739">
    <property type="term" value="C:mitochondrion"/>
    <property type="evidence" value="ECO:0007669"/>
    <property type="project" value="UniProtKB-SubCell"/>
</dbReference>
<dbReference type="GO" id="GO:0005634">
    <property type="term" value="C:nucleus"/>
    <property type="evidence" value="ECO:0007669"/>
    <property type="project" value="UniProtKB-SubCell"/>
</dbReference>
<dbReference type="GO" id="GO:0004364">
    <property type="term" value="F:glutathione transferase activity"/>
    <property type="evidence" value="ECO:0000250"/>
    <property type="project" value="UniProtKB"/>
</dbReference>
<dbReference type="GO" id="GO:1901687">
    <property type="term" value="P:glutathione derivative biosynthetic process"/>
    <property type="evidence" value="ECO:0000250"/>
    <property type="project" value="UniProtKB"/>
</dbReference>
<dbReference type="GO" id="GO:0006749">
    <property type="term" value="P:glutathione metabolic process"/>
    <property type="evidence" value="ECO:0007669"/>
    <property type="project" value="TreeGrafter"/>
</dbReference>
<dbReference type="GO" id="GO:0051122">
    <property type="term" value="P:hepoxilin biosynthetic process"/>
    <property type="evidence" value="ECO:0000250"/>
    <property type="project" value="UniProtKB"/>
</dbReference>
<dbReference type="GO" id="GO:0006693">
    <property type="term" value="P:prostaglandin metabolic process"/>
    <property type="evidence" value="ECO:0000250"/>
    <property type="project" value="UniProtKB"/>
</dbReference>
<dbReference type="CDD" id="cd03210">
    <property type="entry name" value="GST_C_Pi"/>
    <property type="match status" value="1"/>
</dbReference>
<dbReference type="CDD" id="cd03076">
    <property type="entry name" value="GST_N_Pi"/>
    <property type="match status" value="1"/>
</dbReference>
<dbReference type="FunFam" id="1.20.1050.10:FF:000047">
    <property type="entry name" value="Glutathione S-transferase P"/>
    <property type="match status" value="1"/>
</dbReference>
<dbReference type="FunFam" id="3.40.30.10:FF:000071">
    <property type="entry name" value="Glutathione S-transferase P"/>
    <property type="match status" value="1"/>
</dbReference>
<dbReference type="FunFam" id="3.40.30.10:FF:000392">
    <property type="entry name" value="Glutathione S-transferase pi 1"/>
    <property type="match status" value="1"/>
</dbReference>
<dbReference type="Gene3D" id="1.20.1050.10">
    <property type="match status" value="1"/>
</dbReference>
<dbReference type="Gene3D" id="3.40.30.10">
    <property type="entry name" value="Glutaredoxin"/>
    <property type="match status" value="1"/>
</dbReference>
<dbReference type="InterPro" id="IPR010987">
    <property type="entry name" value="Glutathione-S-Trfase_C-like"/>
</dbReference>
<dbReference type="InterPro" id="IPR036282">
    <property type="entry name" value="Glutathione-S-Trfase_C_sf"/>
</dbReference>
<dbReference type="InterPro" id="IPR004045">
    <property type="entry name" value="Glutathione_S-Trfase_N"/>
</dbReference>
<dbReference type="InterPro" id="IPR004046">
    <property type="entry name" value="GST_C"/>
</dbReference>
<dbReference type="InterPro" id="IPR003082">
    <property type="entry name" value="GST_pi"/>
</dbReference>
<dbReference type="InterPro" id="IPR050213">
    <property type="entry name" value="GST_superfamily"/>
</dbReference>
<dbReference type="InterPro" id="IPR036249">
    <property type="entry name" value="Thioredoxin-like_sf"/>
</dbReference>
<dbReference type="PANTHER" id="PTHR11571">
    <property type="entry name" value="GLUTATHIONE S-TRANSFERASE"/>
    <property type="match status" value="1"/>
</dbReference>
<dbReference type="PANTHER" id="PTHR11571:SF255">
    <property type="entry name" value="GLUTATHIONE S-TRANSFERASE P"/>
    <property type="match status" value="1"/>
</dbReference>
<dbReference type="Pfam" id="PF14497">
    <property type="entry name" value="GST_C_3"/>
    <property type="match status" value="1"/>
</dbReference>
<dbReference type="Pfam" id="PF02798">
    <property type="entry name" value="GST_N"/>
    <property type="match status" value="1"/>
</dbReference>
<dbReference type="PRINTS" id="PR01268">
    <property type="entry name" value="GSTRNSFRASEP"/>
</dbReference>
<dbReference type="SFLD" id="SFLDG01205">
    <property type="entry name" value="AMPS.1"/>
    <property type="match status" value="1"/>
</dbReference>
<dbReference type="SFLD" id="SFLDG00363">
    <property type="entry name" value="AMPS_(cytGST):_Alpha-__Mu-__Pi"/>
    <property type="match status" value="1"/>
</dbReference>
<dbReference type="SUPFAM" id="SSF47616">
    <property type="entry name" value="GST C-terminal domain-like"/>
    <property type="match status" value="1"/>
</dbReference>
<dbReference type="SUPFAM" id="SSF52833">
    <property type="entry name" value="Thioredoxin-like"/>
    <property type="match status" value="1"/>
</dbReference>
<dbReference type="PROSITE" id="PS50405">
    <property type="entry name" value="GST_CTER"/>
    <property type="match status" value="1"/>
</dbReference>
<dbReference type="PROSITE" id="PS50404">
    <property type="entry name" value="GST_NTER"/>
    <property type="match status" value="1"/>
</dbReference>
<protein>
    <recommendedName>
        <fullName evidence="4">Glutathione S-transferase P</fullName>
        <ecNumber evidence="2">2.5.1.18</ecNumber>
    </recommendedName>
    <alternativeName>
        <fullName>GST class-pi</fullName>
    </alternativeName>
</protein>
<accession>Q9TTY8</accession>
<sequence length="210" mass="23630">MASYTIVYFPVQGRCEAMRMLLADQDQSWKEEVVAMQSWLQGPLKASCLYGQLPKFQDGDLTLYQSNAILRHLGRTLGLYGKDQREAALVDMVNDGVEDLRCKYVSLIYTNYQAGKEDYVKALPQHLKPFETLLSQNKGGQAFIVGDQISFADYNLLDLLRIHQVLAPSCLDSFPLLSAYVARLNSRPKLKAFLASPEHVNRPINGNGKQ</sequence>
<feature type="chain" id="PRO_0000185897" description="Glutathione S-transferase P">
    <location>
        <begin position="1"/>
        <end position="210"/>
    </location>
</feature>
<feature type="domain" description="GST N-terminal">
    <location>
        <begin position="2"/>
        <end position="81"/>
    </location>
</feature>
<feature type="domain" description="GST C-terminal">
    <location>
        <begin position="83"/>
        <end position="204"/>
    </location>
</feature>
<feature type="binding site" evidence="2">
    <location>
        <position position="8"/>
    </location>
    <ligand>
        <name>glutathione</name>
        <dbReference type="ChEBI" id="CHEBI:57925"/>
    </ligand>
</feature>
<feature type="binding site" evidence="2">
    <location>
        <position position="14"/>
    </location>
    <ligand>
        <name>glutathione</name>
        <dbReference type="ChEBI" id="CHEBI:57925"/>
    </ligand>
</feature>
<feature type="binding site" evidence="2">
    <location>
        <position position="39"/>
    </location>
    <ligand>
        <name>glutathione</name>
        <dbReference type="ChEBI" id="CHEBI:57925"/>
    </ligand>
</feature>
<feature type="binding site" evidence="2">
    <location>
        <position position="45"/>
    </location>
    <ligand>
        <name>glutathione</name>
        <dbReference type="ChEBI" id="CHEBI:57925"/>
    </ligand>
</feature>
<feature type="binding site" evidence="2">
    <location>
        <begin position="52"/>
        <end position="53"/>
    </location>
    <ligand>
        <name>glutathione</name>
        <dbReference type="ChEBI" id="CHEBI:57925"/>
    </ligand>
</feature>
<feature type="binding site" evidence="2">
    <location>
        <begin position="65"/>
        <end position="66"/>
    </location>
    <ligand>
        <name>glutathione</name>
        <dbReference type="ChEBI" id="CHEBI:57925"/>
    </ligand>
</feature>
<feature type="modified residue" description="Phosphotyrosine; by EGFR" evidence="2">
    <location>
        <position position="4"/>
    </location>
</feature>
<feature type="modified residue" description="Phosphothreonine" evidence="2">
    <location>
        <position position="62"/>
    </location>
</feature>
<feature type="modified residue" description="N6-succinyllysine" evidence="3">
    <location>
        <position position="103"/>
    </location>
</feature>
<feature type="modified residue" description="N6-succinyllysine" evidence="3">
    <location>
        <position position="116"/>
    </location>
</feature>
<feature type="modified residue" description="N6-acetyllysine" evidence="2">
    <location>
        <position position="128"/>
    </location>
</feature>
<name>GSTP1_CAPHI</name>
<organism>
    <name type="scientific">Capra hircus</name>
    <name type="common">Goat</name>
    <dbReference type="NCBI Taxonomy" id="9925"/>
    <lineage>
        <taxon>Eukaryota</taxon>
        <taxon>Metazoa</taxon>
        <taxon>Chordata</taxon>
        <taxon>Craniata</taxon>
        <taxon>Vertebrata</taxon>
        <taxon>Euteleostomi</taxon>
        <taxon>Mammalia</taxon>
        <taxon>Eutheria</taxon>
        <taxon>Laurasiatheria</taxon>
        <taxon>Artiodactyla</taxon>
        <taxon>Ruminantia</taxon>
        <taxon>Pecora</taxon>
        <taxon>Bovidae</taxon>
        <taxon>Caprinae</taxon>
        <taxon>Capra</taxon>
    </lineage>
</organism>